<feature type="chain" id="PRO_0000170472" description="Signaling protein YkoW">
    <location>
        <begin position="1"/>
        <end position="800"/>
    </location>
</feature>
<feature type="transmembrane region" description="Helical" evidence="3">
    <location>
        <begin position="5"/>
        <end position="27"/>
    </location>
</feature>
<feature type="transmembrane region" description="Helical" evidence="3">
    <location>
        <begin position="44"/>
        <end position="66"/>
    </location>
</feature>
<feature type="transmembrane region" description="Helical" evidence="3">
    <location>
        <begin position="76"/>
        <end position="98"/>
    </location>
</feature>
<feature type="transmembrane region" description="Helical" evidence="3">
    <location>
        <begin position="103"/>
        <end position="125"/>
    </location>
</feature>
<feature type="transmembrane region" description="Helical" evidence="3">
    <location>
        <begin position="135"/>
        <end position="157"/>
    </location>
</feature>
<feature type="transmembrane region" description="Helical" evidence="3">
    <location>
        <begin position="178"/>
        <end position="200"/>
    </location>
</feature>
<feature type="transmembrane region" description="Helical" evidence="3">
    <location>
        <begin position="215"/>
        <end position="237"/>
    </location>
</feature>
<feature type="domain" description="MHYT" evidence="3">
    <location>
        <begin position="7"/>
        <end position="201"/>
    </location>
</feature>
<feature type="domain" description="PAS">
    <location>
        <begin position="255"/>
        <end position="319"/>
    </location>
</feature>
<feature type="domain" description="GGDEF" evidence="2">
    <location>
        <begin position="402"/>
        <end position="536"/>
    </location>
</feature>
<feature type="domain" description="EAL" evidence="1">
    <location>
        <begin position="545"/>
        <end position="798"/>
    </location>
</feature>
<reference key="1">
    <citation type="journal article" date="1997" name="Nature">
        <title>The complete genome sequence of the Gram-positive bacterium Bacillus subtilis.</title>
        <authorList>
            <person name="Kunst F."/>
            <person name="Ogasawara N."/>
            <person name="Moszer I."/>
            <person name="Albertini A.M."/>
            <person name="Alloni G."/>
            <person name="Azevedo V."/>
            <person name="Bertero M.G."/>
            <person name="Bessieres P."/>
            <person name="Bolotin A."/>
            <person name="Borchert S."/>
            <person name="Borriss R."/>
            <person name="Boursier L."/>
            <person name="Brans A."/>
            <person name="Braun M."/>
            <person name="Brignell S.C."/>
            <person name="Bron S."/>
            <person name="Brouillet S."/>
            <person name="Bruschi C.V."/>
            <person name="Caldwell B."/>
            <person name="Capuano V."/>
            <person name="Carter N.M."/>
            <person name="Choi S.-K."/>
            <person name="Codani J.-J."/>
            <person name="Connerton I.F."/>
            <person name="Cummings N.J."/>
            <person name="Daniel R.A."/>
            <person name="Denizot F."/>
            <person name="Devine K.M."/>
            <person name="Duesterhoeft A."/>
            <person name="Ehrlich S.D."/>
            <person name="Emmerson P.T."/>
            <person name="Entian K.-D."/>
            <person name="Errington J."/>
            <person name="Fabret C."/>
            <person name="Ferrari E."/>
            <person name="Foulger D."/>
            <person name="Fritz C."/>
            <person name="Fujita M."/>
            <person name="Fujita Y."/>
            <person name="Fuma S."/>
            <person name="Galizzi A."/>
            <person name="Galleron N."/>
            <person name="Ghim S.-Y."/>
            <person name="Glaser P."/>
            <person name="Goffeau A."/>
            <person name="Golightly E.J."/>
            <person name="Grandi G."/>
            <person name="Guiseppi G."/>
            <person name="Guy B.J."/>
            <person name="Haga K."/>
            <person name="Haiech J."/>
            <person name="Harwood C.R."/>
            <person name="Henaut A."/>
            <person name="Hilbert H."/>
            <person name="Holsappel S."/>
            <person name="Hosono S."/>
            <person name="Hullo M.-F."/>
            <person name="Itaya M."/>
            <person name="Jones L.-M."/>
            <person name="Joris B."/>
            <person name="Karamata D."/>
            <person name="Kasahara Y."/>
            <person name="Klaerr-Blanchard M."/>
            <person name="Klein C."/>
            <person name="Kobayashi Y."/>
            <person name="Koetter P."/>
            <person name="Koningstein G."/>
            <person name="Krogh S."/>
            <person name="Kumano M."/>
            <person name="Kurita K."/>
            <person name="Lapidus A."/>
            <person name="Lardinois S."/>
            <person name="Lauber J."/>
            <person name="Lazarevic V."/>
            <person name="Lee S.-M."/>
            <person name="Levine A."/>
            <person name="Liu H."/>
            <person name="Masuda S."/>
            <person name="Mauel C."/>
            <person name="Medigue C."/>
            <person name="Medina N."/>
            <person name="Mellado R.P."/>
            <person name="Mizuno M."/>
            <person name="Moestl D."/>
            <person name="Nakai S."/>
            <person name="Noback M."/>
            <person name="Noone D."/>
            <person name="O'Reilly M."/>
            <person name="Ogawa K."/>
            <person name="Ogiwara A."/>
            <person name="Oudega B."/>
            <person name="Park S.-H."/>
            <person name="Parro V."/>
            <person name="Pohl T.M."/>
            <person name="Portetelle D."/>
            <person name="Porwollik S."/>
            <person name="Prescott A.M."/>
            <person name="Presecan E."/>
            <person name="Pujic P."/>
            <person name="Purnelle B."/>
            <person name="Rapoport G."/>
            <person name="Rey M."/>
            <person name="Reynolds S."/>
            <person name="Rieger M."/>
            <person name="Rivolta C."/>
            <person name="Rocha E."/>
            <person name="Roche B."/>
            <person name="Rose M."/>
            <person name="Sadaie Y."/>
            <person name="Sato T."/>
            <person name="Scanlan E."/>
            <person name="Schleich S."/>
            <person name="Schroeter R."/>
            <person name="Scoffone F."/>
            <person name="Sekiguchi J."/>
            <person name="Sekowska A."/>
            <person name="Seror S.J."/>
            <person name="Serror P."/>
            <person name="Shin B.-S."/>
            <person name="Soldo B."/>
            <person name="Sorokin A."/>
            <person name="Tacconi E."/>
            <person name="Takagi T."/>
            <person name="Takahashi H."/>
            <person name="Takemaru K."/>
            <person name="Takeuchi M."/>
            <person name="Tamakoshi A."/>
            <person name="Tanaka T."/>
            <person name="Terpstra P."/>
            <person name="Tognoni A."/>
            <person name="Tosato V."/>
            <person name="Uchiyama S."/>
            <person name="Vandenbol M."/>
            <person name="Vannier F."/>
            <person name="Vassarotti A."/>
            <person name="Viari A."/>
            <person name="Wambutt R."/>
            <person name="Wedler E."/>
            <person name="Wedler H."/>
            <person name="Weitzenegger T."/>
            <person name="Winters P."/>
            <person name="Wipat A."/>
            <person name="Yamamoto H."/>
            <person name="Yamane K."/>
            <person name="Yasumoto K."/>
            <person name="Yata K."/>
            <person name="Yoshida K."/>
            <person name="Yoshikawa H.-F."/>
            <person name="Zumstein E."/>
            <person name="Yoshikawa H."/>
            <person name="Danchin A."/>
        </authorList>
    </citation>
    <scope>NUCLEOTIDE SEQUENCE [LARGE SCALE GENOMIC DNA]</scope>
    <source>
        <strain>168</strain>
    </source>
</reference>
<reference key="2">
    <citation type="journal article" date="2001" name="FEMS Microbiol. Lett.">
        <title>MHYT, a new integral membrane sensor domain.</title>
        <authorList>
            <person name="Galperin M.Y."/>
            <person name="Gaidenko T.A."/>
            <person name="Mulkidjanian A.Y."/>
            <person name="Nakano M."/>
            <person name="Price C.W."/>
        </authorList>
    </citation>
    <scope>IDENTIFICATION OF INITIATOR METHIONINE</scope>
    <scope>DISCUSSION OF SEQUENCE</scope>
    <scope>DISRUPTION PHENOTYPE</scope>
</reference>
<evidence type="ECO:0000255" key="1">
    <source>
        <dbReference type="PROSITE-ProRule" id="PRU00074"/>
    </source>
</evidence>
<evidence type="ECO:0000255" key="2">
    <source>
        <dbReference type="PROSITE-ProRule" id="PRU00095"/>
    </source>
</evidence>
<evidence type="ECO:0000255" key="3">
    <source>
        <dbReference type="PROSITE-ProRule" id="PRU00244"/>
    </source>
</evidence>
<evidence type="ECO:0000269" key="4">
    <source>
    </source>
</evidence>
<evidence type="ECO:0000305" key="5"/>
<name>YKOW_BACSU</name>
<protein>
    <recommendedName>
        <fullName>Signaling protein YkoW</fullName>
    </recommendedName>
</protein>
<comment type="function">
    <text>Probable signaling protein whose physiological role is not yet known.</text>
</comment>
<comment type="subcellular location">
    <subcellularLocation>
        <location evidence="5">Cell membrane</location>
        <topology evidence="3">Multi-pass membrane protein</topology>
    </subcellularLocation>
</comment>
<comment type="disruption phenotype">
    <text evidence="4">Cells do not display any phenotype.</text>
</comment>
<dbReference type="EMBL" id="AL009126">
    <property type="protein sequence ID" value="CAB13199.2"/>
    <property type="molecule type" value="Genomic_DNA"/>
</dbReference>
<dbReference type="PIR" id="A69861">
    <property type="entry name" value="A69861"/>
</dbReference>
<dbReference type="RefSeq" id="WP_009967094.1">
    <property type="nucleotide sequence ID" value="NZ_OZ025638.1"/>
</dbReference>
<dbReference type="RefSeq" id="YP_054577.1">
    <property type="nucleotide sequence ID" value="NC_000964.3"/>
</dbReference>
<dbReference type="SMR" id="O34311"/>
<dbReference type="FunCoup" id="O34311">
    <property type="interactions" value="409"/>
</dbReference>
<dbReference type="STRING" id="224308.BSU13420"/>
<dbReference type="PaxDb" id="224308-BSU13420"/>
<dbReference type="EnsemblBacteria" id="CAB13199">
    <property type="protein sequence ID" value="CAB13199"/>
    <property type="gene ID" value="BSU_13420"/>
</dbReference>
<dbReference type="GeneID" id="2914252"/>
<dbReference type="KEGG" id="bsu:BSU13420"/>
<dbReference type="PATRIC" id="fig|224308.179.peg.1457"/>
<dbReference type="eggNOG" id="COG3300">
    <property type="taxonomic scope" value="Bacteria"/>
</dbReference>
<dbReference type="eggNOG" id="COG5001">
    <property type="taxonomic scope" value="Bacteria"/>
</dbReference>
<dbReference type="InParanoid" id="O34311"/>
<dbReference type="OrthoDB" id="9759607at2"/>
<dbReference type="BioCyc" id="BSUB:BSU13420-MONOMER"/>
<dbReference type="Proteomes" id="UP000001570">
    <property type="component" value="Chromosome"/>
</dbReference>
<dbReference type="GO" id="GO:0005886">
    <property type="term" value="C:plasma membrane"/>
    <property type="evidence" value="ECO:0000318"/>
    <property type="project" value="GO_Central"/>
</dbReference>
<dbReference type="GO" id="GO:0071111">
    <property type="term" value="F:cyclic-guanylate-specific phosphodiesterase activity"/>
    <property type="evidence" value="ECO:0000318"/>
    <property type="project" value="GO_Central"/>
</dbReference>
<dbReference type="CDD" id="cd01948">
    <property type="entry name" value="EAL"/>
    <property type="match status" value="1"/>
</dbReference>
<dbReference type="CDD" id="cd01949">
    <property type="entry name" value="GGDEF"/>
    <property type="match status" value="1"/>
</dbReference>
<dbReference type="Gene3D" id="3.30.70.270">
    <property type="match status" value="1"/>
</dbReference>
<dbReference type="Gene3D" id="3.20.20.450">
    <property type="entry name" value="EAL domain"/>
    <property type="match status" value="1"/>
</dbReference>
<dbReference type="Gene3D" id="3.30.450.20">
    <property type="entry name" value="PAS domain"/>
    <property type="match status" value="1"/>
</dbReference>
<dbReference type="InterPro" id="IPR052155">
    <property type="entry name" value="Biofilm_reg_signaling"/>
</dbReference>
<dbReference type="InterPro" id="IPR001633">
    <property type="entry name" value="EAL_dom"/>
</dbReference>
<dbReference type="InterPro" id="IPR035919">
    <property type="entry name" value="EAL_sf"/>
</dbReference>
<dbReference type="InterPro" id="IPR000160">
    <property type="entry name" value="GGDEF_dom"/>
</dbReference>
<dbReference type="InterPro" id="IPR005330">
    <property type="entry name" value="MHYT_dom"/>
</dbReference>
<dbReference type="InterPro" id="IPR029787">
    <property type="entry name" value="Nucleotide_cyclase"/>
</dbReference>
<dbReference type="InterPro" id="IPR035965">
    <property type="entry name" value="PAS-like_dom_sf"/>
</dbReference>
<dbReference type="InterPro" id="IPR043128">
    <property type="entry name" value="Rev_trsase/Diguanyl_cyclase"/>
</dbReference>
<dbReference type="NCBIfam" id="TIGR00254">
    <property type="entry name" value="GGDEF"/>
    <property type="match status" value="1"/>
</dbReference>
<dbReference type="PANTHER" id="PTHR44757:SF2">
    <property type="entry name" value="BIOFILM ARCHITECTURE MAINTENANCE PROTEIN MBAA"/>
    <property type="match status" value="1"/>
</dbReference>
<dbReference type="PANTHER" id="PTHR44757">
    <property type="entry name" value="DIGUANYLATE CYCLASE DGCP"/>
    <property type="match status" value="1"/>
</dbReference>
<dbReference type="Pfam" id="PF00563">
    <property type="entry name" value="EAL"/>
    <property type="match status" value="1"/>
</dbReference>
<dbReference type="Pfam" id="PF00990">
    <property type="entry name" value="GGDEF"/>
    <property type="match status" value="1"/>
</dbReference>
<dbReference type="Pfam" id="PF03707">
    <property type="entry name" value="MHYT"/>
    <property type="match status" value="3"/>
</dbReference>
<dbReference type="SMART" id="SM00052">
    <property type="entry name" value="EAL"/>
    <property type="match status" value="1"/>
</dbReference>
<dbReference type="SMART" id="SM00267">
    <property type="entry name" value="GGDEF"/>
    <property type="match status" value="1"/>
</dbReference>
<dbReference type="SUPFAM" id="SSF141868">
    <property type="entry name" value="EAL domain-like"/>
    <property type="match status" value="1"/>
</dbReference>
<dbReference type="SUPFAM" id="SSF55073">
    <property type="entry name" value="Nucleotide cyclase"/>
    <property type="match status" value="1"/>
</dbReference>
<dbReference type="SUPFAM" id="SSF55785">
    <property type="entry name" value="PYP-like sensor domain (PAS domain)"/>
    <property type="match status" value="1"/>
</dbReference>
<dbReference type="PROSITE" id="PS50883">
    <property type="entry name" value="EAL"/>
    <property type="match status" value="1"/>
</dbReference>
<dbReference type="PROSITE" id="PS50887">
    <property type="entry name" value="GGDEF"/>
    <property type="match status" value="1"/>
</dbReference>
<dbReference type="PROSITE" id="PS50924">
    <property type="entry name" value="MHYT"/>
    <property type="match status" value="1"/>
</dbReference>
<gene>
    <name type="primary">ykoW</name>
    <name type="ordered locus">BSU13420</name>
</gene>
<sequence length="800" mass="90395">MEIHVTYNTTLICLSILIACTASYISLELSRKVTINTGLKSKIWLIGGSLIMGFGIWSMHFVGMMAVHMEMPMEYEFMPLMAAIGASVSGSFVSLYFVSRHILTYYRLLTGSVVLGASIASMHYIGMSAISRVMIIYEPILFTVSIIIAIAASFVSLKIFFDLAVKKHSEHLIFYKGVSSIVMGIGISGMHYTGMLAATFHKDMAPPGSHMEVQTFHWSIFVTLIIFCIQTLLLFSSHADRKFIKQSERIKDNEQRFQSLIVHNIDAIFILSLEGDIISSNHAGEEMISKFGFSMHDWRNYTSLKVKRLFEQVKKDKQAMNSDSDLITEKGQFHLNITLIPVEVNQELDSIYVICKDMTKQYKAEKEIHRMAHYDSLTDLPNRRHAISHLTKVLNREHSLHYNTVVFFLDLNRFKVINDALGHNVGDQLLQFAAKRLSSVVPDNGFIARLGGDEFIIILTDANTGTGEADVLARKIIQKFKKPFKIQDHTLVTSVSIGIAISPKDGTDGLELMKKADMAMYAAKERNKSKYRYYSFSIGNKETVKLNQEMVLREAIENDRFVLHYQPQFSVKKQKMTGAEALIRLVTPDGQLRPPGEFIGVAEETGLIIDIGKWIIDEACKQARIWHDKGYDLSVAINISARQFQSKDLIPLIKDTLNKYQLPPQLLEVEVTESMTMDNLNHSKKVLSSLTELGIRISIDDFGTGHSSLSYLKDFPIHRLKIDKSFIDDIQTHPKSEQITGAIIAMGHQLSLQVIAEGVENAAQKQLLFEKGCDHLQGFFFSRPIPPEQFEQFIIEQPSQ</sequence>
<organism>
    <name type="scientific">Bacillus subtilis (strain 168)</name>
    <dbReference type="NCBI Taxonomy" id="224308"/>
    <lineage>
        <taxon>Bacteria</taxon>
        <taxon>Bacillati</taxon>
        <taxon>Bacillota</taxon>
        <taxon>Bacilli</taxon>
        <taxon>Bacillales</taxon>
        <taxon>Bacillaceae</taxon>
        <taxon>Bacillus</taxon>
    </lineage>
</organism>
<accession>O34311</accession>
<keyword id="KW-1003">Cell membrane</keyword>
<keyword id="KW-0472">Membrane</keyword>
<keyword id="KW-1185">Reference proteome</keyword>
<keyword id="KW-0812">Transmembrane</keyword>
<keyword id="KW-1133">Transmembrane helix</keyword>
<proteinExistence type="inferred from homology"/>